<name>MGH1_SELML</name>
<keyword id="KW-0326">Glycosidase</keyword>
<keyword id="KW-0378">Hydrolase</keyword>
<keyword id="KW-1185">Reference proteome</keyword>
<evidence type="ECO:0000250" key="1">
    <source>
        <dbReference type="UniProtKB" id="K5BDL0"/>
    </source>
</evidence>
<evidence type="ECO:0000269" key="2">
    <source>
    </source>
</evidence>
<evidence type="ECO:0000303" key="3">
    <source>
    </source>
</evidence>
<evidence type="ECO:0000305" key="4"/>
<evidence type="ECO:0000312" key="5">
    <source>
        <dbReference type="EMBL" id="EFJ37158.1"/>
    </source>
</evidence>
<sequence>MAGPVRCLPPVVEATSIPHAPPVISKEVSEIVNNMLSVAIPAAAAASAQDQRFASQFRCGPEFTTMKAQALEACRKILAENDQGGYTIPAKGLYPYQWNWDSALVSLGLAEMEEERAWEELDRLMSAQWEDGMVPHIVFHKPSSTYFPGPEIWGSPDKPRNTTGITQPPVAAISVRRLLEEAKDKALALAMARKLFPKLLAWHRWFYRARDPEGTGLVATIHPWETGMDNSPAWDEALARVPIDDIPPYVRRDLGHVDAKMRPQKAEYDRYLTLLYRFRALDYDEAKLYYETPFRVTDLCTNCILHKANEDLLWLAGATGACTDESEIRGWTARANVAFDTLFDVEAGLYRCKDQLTGQFLPAATSAGFLPLFAGVASGEKASAVARTLGRWLDDVAYGIPSCDPRDPQFEALRYWRGPVWLIVNWMVSEGLKRYGYGELAQRVERDSYELVKNGGIFEYYCPLTGMGAGGGCFSWTAAMCLAWLFKT</sequence>
<dbReference type="EC" id="3.2.1.170" evidence="2"/>
<dbReference type="EMBL" id="GL377566">
    <property type="protein sequence ID" value="EFJ37158.1"/>
    <property type="molecule type" value="Genomic_DNA"/>
</dbReference>
<dbReference type="RefSeq" id="XP_002961898.1">
    <property type="nucleotide sequence ID" value="XM_002961852.1"/>
</dbReference>
<dbReference type="SMR" id="D8QTR2"/>
<dbReference type="STRING" id="88036.D8QTR2"/>
<dbReference type="EnsemblPlants" id="EFJ37158">
    <property type="protein sequence ID" value="EFJ37158"/>
    <property type="gene ID" value="SELMODRAFT_437793"/>
</dbReference>
<dbReference type="GeneID" id="9656922"/>
<dbReference type="Gramene" id="EFJ37158">
    <property type="protein sequence ID" value="EFJ37158"/>
    <property type="gene ID" value="SELMODRAFT_437793"/>
</dbReference>
<dbReference type="KEGG" id="smo:SELMODRAFT_437793"/>
<dbReference type="eggNOG" id="ENOG502S06X">
    <property type="taxonomic scope" value="Eukaryota"/>
</dbReference>
<dbReference type="HOGENOM" id="CLU_015270_1_0_1"/>
<dbReference type="InParanoid" id="D8QTR2"/>
<dbReference type="OMA" id="SGICEYY"/>
<dbReference type="OrthoDB" id="410058at2759"/>
<dbReference type="BioCyc" id="MetaCyc:MONOMER-18220"/>
<dbReference type="BRENDA" id="3.2.1.208">
    <property type="organism ID" value="9844"/>
</dbReference>
<dbReference type="Proteomes" id="UP000001514">
    <property type="component" value="Unassembled WGS sequence"/>
</dbReference>
<dbReference type="GO" id="GO:0005789">
    <property type="term" value="C:endoplasmic reticulum membrane"/>
    <property type="evidence" value="ECO:0000318"/>
    <property type="project" value="GO_Central"/>
</dbReference>
<dbReference type="GO" id="GO:0004573">
    <property type="term" value="F:Glc3Man9GlcNAc2 oligosaccharide glucosidase activity"/>
    <property type="evidence" value="ECO:0000318"/>
    <property type="project" value="GO_Central"/>
</dbReference>
<dbReference type="GO" id="GO:0102547">
    <property type="term" value="F:glucosylglycerate hydrolase activity"/>
    <property type="evidence" value="ECO:0000314"/>
    <property type="project" value="UniProtKB"/>
</dbReference>
<dbReference type="GO" id="GO:0102546">
    <property type="term" value="F:mannosylglycerate hydrolase activity"/>
    <property type="evidence" value="ECO:0000314"/>
    <property type="project" value="UniProtKB"/>
</dbReference>
<dbReference type="GO" id="GO:0051478">
    <property type="term" value="P:mannosylglycerate metabolic process"/>
    <property type="evidence" value="ECO:0000314"/>
    <property type="project" value="UniProtKB"/>
</dbReference>
<dbReference type="GO" id="GO:0009311">
    <property type="term" value="P:oligosaccharide metabolic process"/>
    <property type="evidence" value="ECO:0007669"/>
    <property type="project" value="InterPro"/>
</dbReference>
<dbReference type="GO" id="GO:0006487">
    <property type="term" value="P:protein N-linked glycosylation"/>
    <property type="evidence" value="ECO:0000318"/>
    <property type="project" value="GO_Central"/>
</dbReference>
<dbReference type="Gene3D" id="1.50.10.10">
    <property type="match status" value="1"/>
</dbReference>
<dbReference type="InterPro" id="IPR008928">
    <property type="entry name" value="6-hairpin_glycosidase_sf"/>
</dbReference>
<dbReference type="InterPro" id="IPR012341">
    <property type="entry name" value="6hp_glycosidase-like_sf"/>
</dbReference>
<dbReference type="InterPro" id="IPR004888">
    <property type="entry name" value="Glycoside_hydrolase_63"/>
</dbReference>
<dbReference type="InterPro" id="IPR054491">
    <property type="entry name" value="MGH1-like_GH"/>
</dbReference>
<dbReference type="PANTHER" id="PTHR10412">
    <property type="entry name" value="MANNOSYL-OLIGOSACCHARIDE GLUCOSIDASE"/>
    <property type="match status" value="1"/>
</dbReference>
<dbReference type="PANTHER" id="PTHR10412:SF11">
    <property type="entry name" value="MANNOSYL-OLIGOSACCHARIDE GLUCOSIDASE"/>
    <property type="match status" value="1"/>
</dbReference>
<dbReference type="Pfam" id="PF22422">
    <property type="entry name" value="MGH1-like_GH"/>
    <property type="match status" value="1"/>
</dbReference>
<dbReference type="SUPFAM" id="SSF48208">
    <property type="entry name" value="Six-hairpin glycosidases"/>
    <property type="match status" value="1"/>
</dbReference>
<accession>D8QTR2</accession>
<proteinExistence type="evidence at protein level"/>
<gene>
    <name evidence="3" type="primary">MGH</name>
    <name evidence="5" type="ORF">SELMODRAFT_437793</name>
</gene>
<protein>
    <recommendedName>
        <fullName evidence="4">Mannosylglycerate hydrolase MGH1</fullName>
        <ecNumber evidence="2">3.2.1.170</ecNumber>
    </recommendedName>
</protein>
<reference key="1">
    <citation type="journal article" date="2011" name="Science">
        <title>The Selaginella genome identifies genetic changes associated with the evolution of vascular plants.</title>
        <authorList>
            <person name="Banks J.A."/>
            <person name="Nishiyama T."/>
            <person name="Hasebe M."/>
            <person name="Bowman J.L."/>
            <person name="Gribskov M."/>
            <person name="dePamphilis C."/>
            <person name="Albert V.A."/>
            <person name="Aono N."/>
            <person name="Aoyama T."/>
            <person name="Ambrose B.A."/>
            <person name="Ashton N.W."/>
            <person name="Axtell M.J."/>
            <person name="Barker E."/>
            <person name="Barker M.S."/>
            <person name="Bennetzen J.L."/>
            <person name="Bonawitz N.D."/>
            <person name="Chapple C."/>
            <person name="Cheng C."/>
            <person name="Correa L.G."/>
            <person name="Dacre M."/>
            <person name="DeBarry J."/>
            <person name="Dreyer I."/>
            <person name="Elias M."/>
            <person name="Engstrom E.M."/>
            <person name="Estelle M."/>
            <person name="Feng L."/>
            <person name="Finet C."/>
            <person name="Floyd S.K."/>
            <person name="Frommer W.B."/>
            <person name="Fujita T."/>
            <person name="Gramzow L."/>
            <person name="Gutensohn M."/>
            <person name="Harholt J."/>
            <person name="Hattori M."/>
            <person name="Heyl A."/>
            <person name="Hirai T."/>
            <person name="Hiwatashi Y."/>
            <person name="Ishikawa M."/>
            <person name="Iwata M."/>
            <person name="Karol K.G."/>
            <person name="Koehler B."/>
            <person name="Kolukisaoglu U."/>
            <person name="Kubo M."/>
            <person name="Kurata T."/>
            <person name="Lalonde S."/>
            <person name="Li K."/>
            <person name="Li Y."/>
            <person name="Litt A."/>
            <person name="Lyons E."/>
            <person name="Manning G."/>
            <person name="Maruyama T."/>
            <person name="Michael T.P."/>
            <person name="Mikami K."/>
            <person name="Miyazaki S."/>
            <person name="Morinaga S."/>
            <person name="Murata T."/>
            <person name="Mueller-Roeber B."/>
            <person name="Nelson D.R."/>
            <person name="Obara M."/>
            <person name="Oguri Y."/>
            <person name="Olmstead R.G."/>
            <person name="Onodera N."/>
            <person name="Petersen B.L."/>
            <person name="Pils B."/>
            <person name="Prigge M."/>
            <person name="Rensing S.A."/>
            <person name="Riano-Pachon D.M."/>
            <person name="Roberts A.W."/>
            <person name="Sato Y."/>
            <person name="Scheller H.V."/>
            <person name="Schulz B."/>
            <person name="Schulz C."/>
            <person name="Shakirov E.V."/>
            <person name="Shibagaki N."/>
            <person name="Shinohara N."/>
            <person name="Shippen D.E."/>
            <person name="Soerensen I."/>
            <person name="Sotooka R."/>
            <person name="Sugimoto N."/>
            <person name="Sugita M."/>
            <person name="Sumikawa N."/>
            <person name="Tanurdzic M."/>
            <person name="Theissen G."/>
            <person name="Ulvskov P."/>
            <person name="Wakazuki S."/>
            <person name="Weng J.K."/>
            <person name="Willats W.W."/>
            <person name="Wipf D."/>
            <person name="Wolf P.G."/>
            <person name="Yang L."/>
            <person name="Zimmer A.D."/>
            <person name="Zhu Q."/>
            <person name="Mitros T."/>
            <person name="Hellsten U."/>
            <person name="Loque D."/>
            <person name="Otillar R."/>
            <person name="Salamov A."/>
            <person name="Schmutz J."/>
            <person name="Shapiro H."/>
            <person name="Lindquist E."/>
            <person name="Lucas S."/>
            <person name="Rokhsar D."/>
            <person name="Grigoriev I.V."/>
        </authorList>
    </citation>
    <scope>NUCLEOTIDE SEQUENCE [LARGE SCALE GENOMIC DNA]</scope>
</reference>
<reference key="2">
    <citation type="journal article" date="2013" name="Planta">
        <title>The plant Selaginella moellendorffii possesses enzymes for synthesis and hydrolysis of the compatible solutes mannosylglycerate and glucosylglycerate.</title>
        <authorList>
            <person name="Nobre A."/>
            <person name="Empadinhas N."/>
            <person name="Nobre M.F."/>
            <person name="Lourenco E.C."/>
            <person name="Maycock C."/>
            <person name="Ventura M.R."/>
            <person name="Mingote A."/>
            <person name="da Costa M.S."/>
        </authorList>
    </citation>
    <scope>FUNCTION</scope>
    <scope>CATALYTIC ACTIVITY</scope>
    <scope>ACTIVITY REGULATION</scope>
    <scope>BIOPHYSICOCHEMICAL PROPERTIES</scope>
</reference>
<organism>
    <name type="scientific">Selaginella moellendorffii</name>
    <name type="common">Spikemoss</name>
    <dbReference type="NCBI Taxonomy" id="88036"/>
    <lineage>
        <taxon>Eukaryota</taxon>
        <taxon>Viridiplantae</taxon>
        <taxon>Streptophyta</taxon>
        <taxon>Embryophyta</taxon>
        <taxon>Tracheophyta</taxon>
        <taxon>Lycopodiopsida</taxon>
        <taxon>Selaginellales</taxon>
        <taxon>Selaginellaceae</taxon>
        <taxon>Selaginella</taxon>
    </lineage>
</organism>
<feature type="chain" id="PRO_0000451956" description="Mannosylglycerate hydrolase MGH1">
    <location>
        <begin position="1"/>
        <end position="488"/>
    </location>
</feature>
<feature type="active site" description="Proton donor" evidence="1">
    <location>
        <position position="229"/>
    </location>
</feature>
<feature type="active site" description="Proton acceptor" evidence="1">
    <location>
        <position position="459"/>
    </location>
</feature>
<feature type="binding site" evidence="1">
    <location>
        <position position="94"/>
    </location>
    <ligand>
        <name>substrate</name>
    </ligand>
</feature>
<feature type="binding site" evidence="1">
    <location>
        <begin position="98"/>
        <end position="101"/>
    </location>
    <ligand>
        <name>substrate</name>
    </ligand>
</feature>
<feature type="binding site" evidence="1">
    <location>
        <position position="146"/>
    </location>
    <ligand>
        <name>substrate</name>
    </ligand>
</feature>
<feature type="binding site" evidence="1">
    <location>
        <position position="167"/>
    </location>
    <ligand>
        <name>substrate</name>
    </ligand>
</feature>
<feature type="binding site" evidence="1">
    <location>
        <position position="227"/>
    </location>
    <ligand>
        <name>substrate</name>
    </ligand>
</feature>
<feature type="binding site" evidence="1">
    <location>
        <position position="262"/>
    </location>
    <ligand>
        <name>substrate</name>
    </ligand>
</feature>
<feature type="binding site" evidence="1">
    <location>
        <begin position="415"/>
        <end position="416"/>
    </location>
    <ligand>
        <name>substrate</name>
    </ligand>
</feature>
<comment type="function">
    <text evidence="2">Catalyzes the hydrolysis of alpha-D-mannosyl-glycerate (MG) to D-glycerate and D-mannose (PubMed:23179444). Can also hydrolyze alpha-D-glucopyranosyl-glycerate (GG)with lower efficiency (PubMed:23179444).</text>
</comment>
<comment type="catalytic activity">
    <reaction evidence="2">
        <text>(2R)-2-O-(alpha-D-mannosyl)-glycerate + H2O = D-mannose + (R)-glycerate</text>
        <dbReference type="Rhea" id="RHEA:58456"/>
        <dbReference type="ChEBI" id="CHEBI:4208"/>
        <dbReference type="ChEBI" id="CHEBI:15377"/>
        <dbReference type="ChEBI" id="CHEBI:16659"/>
        <dbReference type="ChEBI" id="CHEBI:57541"/>
        <dbReference type="EC" id="3.2.1.170"/>
    </reaction>
    <physiologicalReaction direction="left-to-right" evidence="2">
        <dbReference type="Rhea" id="RHEA:58457"/>
    </physiologicalReaction>
</comment>
<comment type="catalytic activity">
    <reaction evidence="2">
        <text>(2R)-2-O-(alpha-D-glucopyranosyl)-glycerate + H2O = (R)-glycerate + D-glucose</text>
        <dbReference type="Rhea" id="RHEA:32059"/>
        <dbReference type="ChEBI" id="CHEBI:4167"/>
        <dbReference type="ChEBI" id="CHEBI:15377"/>
        <dbReference type="ChEBI" id="CHEBI:16659"/>
        <dbReference type="ChEBI" id="CHEBI:62510"/>
    </reaction>
    <physiologicalReaction direction="left-to-right" evidence="2">
        <dbReference type="Rhea" id="RHEA:32060"/>
    </physiologicalReaction>
</comment>
<comment type="activity regulation">
    <text evidence="2">Activity is not dependent on divalent cations, but it is enhanced by Mn(2+).</text>
</comment>
<comment type="biophysicochemical properties">
    <kinetics>
        <KM evidence="2">11.8 mM for 2-O-(alpha-D-mannosyl)-glycerate (at 40 degrees Celsius)</KM>
        <KM evidence="2">5.9 mM for 2-O-(alpha-D-glucopyranosyl)-D-glycerate (at 40 degrees Celsius)</KM>
        <Vmax evidence="2">40.5 umol/min/mg enzyme with 2-O-(alpha-D-mannosyl)-glycerate as substrate (at 40 degrees Celsius)</Vmax>
        <Vmax evidence="2">7.3 umol/min/mg enzyme with 2-O-(alpha-D-glucopyranosyl)-D-glycerate as substrate (at 40 degrees Celsius)</Vmax>
    </kinetics>
    <phDependence>
        <text evidence="2">Optimum pH is 6.0-6.50.</text>
    </phDependence>
    <temperatureDependence>
        <text evidence="2">Optimum temperature is 40 degrees Celsius.</text>
    </temperatureDependence>
</comment>
<comment type="similarity">
    <text evidence="4">Belongs to the glycosyl hydrolase 63 family.</text>
</comment>